<proteinExistence type="inferred from homology"/>
<evidence type="ECO:0000255" key="1">
    <source>
        <dbReference type="HAMAP-Rule" id="MF_01363"/>
    </source>
</evidence>
<evidence type="ECO:0000305" key="2"/>
<keyword id="KW-1185">Reference proteome</keyword>
<keyword id="KW-0687">Ribonucleoprotein</keyword>
<keyword id="KW-0689">Ribosomal protein</keyword>
<keyword id="KW-0694">RNA-binding</keyword>
<keyword id="KW-0699">rRNA-binding</keyword>
<feature type="chain" id="PRO_1000214881" description="Large ribosomal subunit protein bL21">
    <location>
        <begin position="1"/>
        <end position="101"/>
    </location>
</feature>
<name>RL21_BEUC1</name>
<accession>C5C3W5</accession>
<protein>
    <recommendedName>
        <fullName evidence="1">Large ribosomal subunit protein bL21</fullName>
    </recommendedName>
    <alternativeName>
        <fullName evidence="2">50S ribosomal protein L21</fullName>
    </alternativeName>
</protein>
<dbReference type="EMBL" id="CP001618">
    <property type="protein sequence ID" value="ACQ79878.1"/>
    <property type="molecule type" value="Genomic_DNA"/>
</dbReference>
<dbReference type="RefSeq" id="WP_015882118.1">
    <property type="nucleotide sequence ID" value="NC_012669.1"/>
</dbReference>
<dbReference type="SMR" id="C5C3W5"/>
<dbReference type="STRING" id="471853.Bcav_1622"/>
<dbReference type="KEGG" id="bcv:Bcav_1622"/>
<dbReference type="eggNOG" id="COG0261">
    <property type="taxonomic scope" value="Bacteria"/>
</dbReference>
<dbReference type="HOGENOM" id="CLU_061463_3_0_11"/>
<dbReference type="OrthoDB" id="9813334at2"/>
<dbReference type="Proteomes" id="UP000007962">
    <property type="component" value="Chromosome"/>
</dbReference>
<dbReference type="GO" id="GO:0005737">
    <property type="term" value="C:cytoplasm"/>
    <property type="evidence" value="ECO:0007669"/>
    <property type="project" value="UniProtKB-ARBA"/>
</dbReference>
<dbReference type="GO" id="GO:1990904">
    <property type="term" value="C:ribonucleoprotein complex"/>
    <property type="evidence" value="ECO:0007669"/>
    <property type="project" value="UniProtKB-KW"/>
</dbReference>
<dbReference type="GO" id="GO:0005840">
    <property type="term" value="C:ribosome"/>
    <property type="evidence" value="ECO:0007669"/>
    <property type="project" value="UniProtKB-KW"/>
</dbReference>
<dbReference type="GO" id="GO:0019843">
    <property type="term" value="F:rRNA binding"/>
    <property type="evidence" value="ECO:0007669"/>
    <property type="project" value="UniProtKB-UniRule"/>
</dbReference>
<dbReference type="GO" id="GO:0003735">
    <property type="term" value="F:structural constituent of ribosome"/>
    <property type="evidence" value="ECO:0007669"/>
    <property type="project" value="InterPro"/>
</dbReference>
<dbReference type="GO" id="GO:0006412">
    <property type="term" value="P:translation"/>
    <property type="evidence" value="ECO:0007669"/>
    <property type="project" value="UniProtKB-UniRule"/>
</dbReference>
<dbReference type="HAMAP" id="MF_01363">
    <property type="entry name" value="Ribosomal_bL21"/>
    <property type="match status" value="1"/>
</dbReference>
<dbReference type="InterPro" id="IPR028909">
    <property type="entry name" value="bL21-like"/>
</dbReference>
<dbReference type="InterPro" id="IPR036164">
    <property type="entry name" value="bL21-like_sf"/>
</dbReference>
<dbReference type="InterPro" id="IPR001787">
    <property type="entry name" value="Ribosomal_bL21"/>
</dbReference>
<dbReference type="InterPro" id="IPR018258">
    <property type="entry name" value="Ribosomal_bL21_CS"/>
</dbReference>
<dbReference type="NCBIfam" id="TIGR00061">
    <property type="entry name" value="L21"/>
    <property type="match status" value="1"/>
</dbReference>
<dbReference type="PANTHER" id="PTHR21349">
    <property type="entry name" value="50S RIBOSOMAL PROTEIN L21"/>
    <property type="match status" value="1"/>
</dbReference>
<dbReference type="PANTHER" id="PTHR21349:SF0">
    <property type="entry name" value="LARGE RIBOSOMAL SUBUNIT PROTEIN BL21M"/>
    <property type="match status" value="1"/>
</dbReference>
<dbReference type="Pfam" id="PF00829">
    <property type="entry name" value="Ribosomal_L21p"/>
    <property type="match status" value="1"/>
</dbReference>
<dbReference type="SUPFAM" id="SSF141091">
    <property type="entry name" value="L21p-like"/>
    <property type="match status" value="1"/>
</dbReference>
<dbReference type="PROSITE" id="PS01169">
    <property type="entry name" value="RIBOSOMAL_L21"/>
    <property type="match status" value="1"/>
</dbReference>
<reference key="1">
    <citation type="journal article" date="2009" name="Stand. Genomic Sci.">
        <title>Complete genome sequence of Beutenbergia cavernae type strain (HKI 0122).</title>
        <authorList>
            <person name="Land M."/>
            <person name="Pukall R."/>
            <person name="Abt B."/>
            <person name="Goker M."/>
            <person name="Rohde M."/>
            <person name="Glavina Del Rio T."/>
            <person name="Tice H."/>
            <person name="Copeland A."/>
            <person name="Cheng J.F."/>
            <person name="Lucas S."/>
            <person name="Chen F."/>
            <person name="Nolan M."/>
            <person name="Bruce D."/>
            <person name="Goodwin L."/>
            <person name="Pitluck S."/>
            <person name="Ivanova N."/>
            <person name="Mavromatis K."/>
            <person name="Ovchinnikova G."/>
            <person name="Pati A."/>
            <person name="Chen A."/>
            <person name="Palaniappan K."/>
            <person name="Hauser L."/>
            <person name="Chang Y.J."/>
            <person name="Jefferies C.C."/>
            <person name="Saunders E."/>
            <person name="Brettin T."/>
            <person name="Detter J.C."/>
            <person name="Han C."/>
            <person name="Chain P."/>
            <person name="Bristow J."/>
            <person name="Eisen J.A."/>
            <person name="Markowitz V."/>
            <person name="Hugenholtz P."/>
            <person name="Kyrpides N.C."/>
            <person name="Klenk H.P."/>
            <person name="Lapidus A."/>
        </authorList>
    </citation>
    <scope>NUCLEOTIDE SEQUENCE [LARGE SCALE GENOMIC DNA]</scope>
    <source>
        <strain>ATCC BAA-8 / DSM 12333 / CCUG 43141 / JCM 11478 / NBRC 16432 / NCIMB 13614 / HKI 0122</strain>
    </source>
</reference>
<comment type="function">
    <text evidence="1">This protein binds to 23S rRNA in the presence of protein L20.</text>
</comment>
<comment type="subunit">
    <text evidence="1">Part of the 50S ribosomal subunit. Contacts protein L20.</text>
</comment>
<comment type="similarity">
    <text evidence="1">Belongs to the bacterial ribosomal protein bL21 family.</text>
</comment>
<sequence length="101" mass="11067">MVYAIVKAGGRQEKVSVGDIVVVDRVGGEVGDTIELTPILLVDGDKVTNGKDLADVRVSAEIVRPEKGPKITILKFKNKTGYRKRQGHRQKLTRLKVTDIA</sequence>
<organism>
    <name type="scientific">Beutenbergia cavernae (strain ATCC BAA-8 / DSM 12333 / CCUG 43141 / JCM 11478 / NBRC 16432 / NCIMB 13614 / HKI 0122)</name>
    <dbReference type="NCBI Taxonomy" id="471853"/>
    <lineage>
        <taxon>Bacteria</taxon>
        <taxon>Bacillati</taxon>
        <taxon>Actinomycetota</taxon>
        <taxon>Actinomycetes</taxon>
        <taxon>Micrococcales</taxon>
        <taxon>Beutenbergiaceae</taxon>
        <taxon>Beutenbergia</taxon>
    </lineage>
</organism>
<gene>
    <name evidence="1" type="primary">rplU</name>
    <name type="ordered locus">Bcav_1622</name>
</gene>